<comment type="function">
    <text evidence="1">NQR complex catalyzes the reduction of ubiquinone-1 to ubiquinol by two successive reactions, coupled with the transport of Na(+) ions from the cytoplasm to the periplasm. The first step is catalyzed by NqrF, which accepts electrons from NADH and reduces ubiquinone-1 to ubisemiquinone by a one-electron transfer pathway.</text>
</comment>
<comment type="catalytic activity">
    <reaction evidence="1">
        <text>a ubiquinone + n Na(+)(in) + NADH + H(+) = a ubiquinol + n Na(+)(out) + NAD(+)</text>
        <dbReference type="Rhea" id="RHEA:47748"/>
        <dbReference type="Rhea" id="RHEA-COMP:9565"/>
        <dbReference type="Rhea" id="RHEA-COMP:9566"/>
        <dbReference type="ChEBI" id="CHEBI:15378"/>
        <dbReference type="ChEBI" id="CHEBI:16389"/>
        <dbReference type="ChEBI" id="CHEBI:17976"/>
        <dbReference type="ChEBI" id="CHEBI:29101"/>
        <dbReference type="ChEBI" id="CHEBI:57540"/>
        <dbReference type="ChEBI" id="CHEBI:57945"/>
        <dbReference type="EC" id="7.2.1.1"/>
    </reaction>
</comment>
<comment type="cofactor">
    <cofactor evidence="1">
        <name>[2Fe-2S] cluster</name>
        <dbReference type="ChEBI" id="CHEBI:190135"/>
    </cofactor>
    <text evidence="1">Binds 1 [2Fe-2S] cluster.</text>
</comment>
<comment type="cofactor">
    <cofactor evidence="1">
        <name>FAD</name>
        <dbReference type="ChEBI" id="CHEBI:57692"/>
    </cofactor>
</comment>
<comment type="subunit">
    <text evidence="1">Composed of six subunits; NqrA, NqrB, NqrC, NqrD, NqrE and NqrF.</text>
</comment>
<comment type="subcellular location">
    <subcellularLocation>
        <location evidence="1">Cell inner membrane</location>
        <topology evidence="1">Single-pass membrane protein</topology>
    </subcellularLocation>
</comment>
<comment type="similarity">
    <text evidence="1">Belongs to the NqrF family.</text>
</comment>
<organism>
    <name type="scientific">Chlamydia pneumoniae</name>
    <name type="common">Chlamydophila pneumoniae</name>
    <dbReference type="NCBI Taxonomy" id="83558"/>
    <lineage>
        <taxon>Bacteria</taxon>
        <taxon>Pseudomonadati</taxon>
        <taxon>Chlamydiota</taxon>
        <taxon>Chlamydiia</taxon>
        <taxon>Chlamydiales</taxon>
        <taxon>Chlamydiaceae</taxon>
        <taxon>Chlamydia/Chlamydophila group</taxon>
        <taxon>Chlamydia</taxon>
    </lineage>
</organism>
<evidence type="ECO:0000255" key="1">
    <source>
        <dbReference type="HAMAP-Rule" id="MF_00430"/>
    </source>
</evidence>
<evidence type="ECO:0000305" key="2"/>
<accession>Q9Z723</accession>
<accession>Q9JS95</accession>
<feature type="chain" id="PRO_0000074491" description="Na(+)-translocating NADH-quinone reductase subunit F">
    <location>
        <begin position="1"/>
        <end position="431"/>
    </location>
</feature>
<feature type="transmembrane region" description="Helical" evidence="1">
    <location>
        <begin position="9"/>
        <end position="29"/>
    </location>
</feature>
<feature type="domain" description="2Fe-2S ferredoxin-type" evidence="1">
    <location>
        <begin position="39"/>
        <end position="133"/>
    </location>
</feature>
<feature type="domain" description="FAD-binding FR-type" evidence="1">
    <location>
        <begin position="136"/>
        <end position="286"/>
    </location>
</feature>
<feature type="region of interest" description="Catalytic">
    <location>
        <begin position="289"/>
        <end position="413"/>
    </location>
</feature>
<feature type="binding site" evidence="1">
    <location>
        <position position="76"/>
    </location>
    <ligand>
        <name>[2Fe-2S] cluster</name>
        <dbReference type="ChEBI" id="CHEBI:190135"/>
    </ligand>
</feature>
<feature type="binding site" evidence="1">
    <location>
        <position position="82"/>
    </location>
    <ligand>
        <name>[2Fe-2S] cluster</name>
        <dbReference type="ChEBI" id="CHEBI:190135"/>
    </ligand>
</feature>
<feature type="binding site" evidence="1">
    <location>
        <position position="85"/>
    </location>
    <ligand>
        <name>[2Fe-2S] cluster</name>
        <dbReference type="ChEBI" id="CHEBI:190135"/>
    </ligand>
</feature>
<feature type="binding site" evidence="1">
    <location>
        <position position="117"/>
    </location>
    <ligand>
        <name>[2Fe-2S] cluster</name>
        <dbReference type="ChEBI" id="CHEBI:190135"/>
    </ligand>
</feature>
<feature type="sequence conflict" description="In Ref. 3; BAA99091." evidence="2" ref="3">
    <original>L</original>
    <variation>P</variation>
    <location>
        <position position="4"/>
    </location>
</feature>
<gene>
    <name evidence="1" type="primary">nqrF</name>
    <name type="synonym">nqr6</name>
    <name type="ordered locus">CPn_0883</name>
    <name type="ordered locus">CP_0983</name>
    <name type="ordered locus">CpB0912</name>
</gene>
<proteinExistence type="inferred from homology"/>
<keyword id="KW-0001">2Fe-2S</keyword>
<keyword id="KW-0997">Cell inner membrane</keyword>
<keyword id="KW-1003">Cell membrane</keyword>
<keyword id="KW-0274">FAD</keyword>
<keyword id="KW-0285">Flavoprotein</keyword>
<keyword id="KW-0406">Ion transport</keyword>
<keyword id="KW-0408">Iron</keyword>
<keyword id="KW-0411">Iron-sulfur</keyword>
<keyword id="KW-0472">Membrane</keyword>
<keyword id="KW-0479">Metal-binding</keyword>
<keyword id="KW-0520">NAD</keyword>
<keyword id="KW-0915">Sodium</keyword>
<keyword id="KW-0739">Sodium transport</keyword>
<keyword id="KW-1278">Translocase</keyword>
<keyword id="KW-0812">Transmembrane</keyword>
<keyword id="KW-1133">Transmembrane helix</keyword>
<keyword id="KW-0813">Transport</keyword>
<keyword id="KW-0830">Ubiquinone</keyword>
<sequence>MTWLSGLYFICIASLIFCAIGVILAGVILLSRKLFIKVHPCKLKINDNEELTKTVESGQTLLVSLLSSGIPIPSPCGGKATCKQCKVRVVKNADEPLETDRSTFSKRQLEEGWRLSCQCKVQHDMSLEIEERYLNASSWEGTVISNDNVATFIKELVVAVDPNKPIPFKPGGYLQITVPSYKTNSSDWKQTMAPEYYSDWEHFHLFDQVIDNSQLPADSANKAYSLASYPAELPTIKFNIRIATPPFINGKPNSEIPWGVCSSYVFSLKPGDKITVSGPYGESFMKDDDRPLIFLIGGAGSSFGRSHILDLLLNKHSKREIDLWYGARSLKENIYQEEYENLERQFPNFHYHLVLSEPLPEDIAAGWDKDDPTKTNFLFRAFNLGQLSRLDNPEDYLYYVCGPPLHNSSILKLLGDYGVERSSIILDDFGS</sequence>
<name>NQRF_CHLPN</name>
<reference key="1">
    <citation type="journal article" date="1999" name="Nat. Genet.">
        <title>Comparative genomes of Chlamydia pneumoniae and C. trachomatis.</title>
        <authorList>
            <person name="Kalman S."/>
            <person name="Mitchell W.P."/>
            <person name="Marathe R."/>
            <person name="Lammel C.J."/>
            <person name="Fan J."/>
            <person name="Hyman R.W."/>
            <person name="Olinger L."/>
            <person name="Grimwood J."/>
            <person name="Davis R.W."/>
            <person name="Stephens R.S."/>
        </authorList>
    </citation>
    <scope>NUCLEOTIDE SEQUENCE [LARGE SCALE GENOMIC DNA]</scope>
    <source>
        <strain>CWL029</strain>
    </source>
</reference>
<reference key="2">
    <citation type="journal article" date="2000" name="Nucleic Acids Res.">
        <title>Genome sequences of Chlamydia trachomatis MoPn and Chlamydia pneumoniae AR39.</title>
        <authorList>
            <person name="Read T.D."/>
            <person name="Brunham R.C."/>
            <person name="Shen C."/>
            <person name="Gill S.R."/>
            <person name="Heidelberg J.F."/>
            <person name="White O."/>
            <person name="Hickey E.K."/>
            <person name="Peterson J.D."/>
            <person name="Utterback T.R."/>
            <person name="Berry K.J."/>
            <person name="Bass S."/>
            <person name="Linher K.D."/>
            <person name="Weidman J.F."/>
            <person name="Khouri H.M."/>
            <person name="Craven B."/>
            <person name="Bowman C."/>
            <person name="Dodson R.J."/>
            <person name="Gwinn M.L."/>
            <person name="Nelson W.C."/>
            <person name="DeBoy R.T."/>
            <person name="Kolonay J.F."/>
            <person name="McClarty G."/>
            <person name="Salzberg S.L."/>
            <person name="Eisen J.A."/>
            <person name="Fraser C.M."/>
        </authorList>
    </citation>
    <scope>NUCLEOTIDE SEQUENCE [LARGE SCALE GENOMIC DNA]</scope>
    <source>
        <strain>AR39</strain>
    </source>
</reference>
<reference key="3">
    <citation type="journal article" date="2000" name="Nucleic Acids Res.">
        <title>Comparison of whole genome sequences of Chlamydia pneumoniae J138 from Japan and CWL029 from USA.</title>
        <authorList>
            <person name="Shirai M."/>
            <person name="Hirakawa H."/>
            <person name="Kimoto M."/>
            <person name="Tabuchi M."/>
            <person name="Kishi F."/>
            <person name="Ouchi K."/>
            <person name="Shiba T."/>
            <person name="Ishii K."/>
            <person name="Hattori M."/>
            <person name="Kuhara S."/>
            <person name="Nakazawa T."/>
        </authorList>
    </citation>
    <scope>NUCLEOTIDE SEQUENCE [LARGE SCALE GENOMIC DNA]</scope>
    <source>
        <strain>J138</strain>
    </source>
</reference>
<reference key="4">
    <citation type="submission" date="2002-05" db="EMBL/GenBank/DDBJ databases">
        <title>The genome sequence of Chlamydia pneumoniae TW183 and comparison with other Chlamydia strains based on whole genome sequence analysis.</title>
        <authorList>
            <person name="Geng M.M."/>
            <person name="Schuhmacher A."/>
            <person name="Muehldorfer I."/>
            <person name="Bensch K.W."/>
            <person name="Schaefer K.P."/>
            <person name="Schneider S."/>
            <person name="Pohl T."/>
            <person name="Essig A."/>
            <person name="Marre R."/>
            <person name="Melchers K."/>
        </authorList>
    </citation>
    <scope>NUCLEOTIDE SEQUENCE [LARGE SCALE GENOMIC DNA]</scope>
    <source>
        <strain>TW-183</strain>
    </source>
</reference>
<dbReference type="EC" id="7.2.1.1" evidence="1"/>
<dbReference type="EMBL" id="AE001363">
    <property type="protein sequence ID" value="AAD19021.1"/>
    <property type="molecule type" value="Genomic_DNA"/>
</dbReference>
<dbReference type="EMBL" id="AE002161">
    <property type="protein sequence ID" value="AAF38762.1"/>
    <property type="molecule type" value="Genomic_DNA"/>
</dbReference>
<dbReference type="EMBL" id="BA000008">
    <property type="protein sequence ID" value="BAA99091.1"/>
    <property type="molecule type" value="Genomic_DNA"/>
</dbReference>
<dbReference type="EMBL" id="AE009440">
    <property type="protein sequence ID" value="AAP98841.1"/>
    <property type="molecule type" value="Genomic_DNA"/>
</dbReference>
<dbReference type="PIR" id="A86601">
    <property type="entry name" value="A86601"/>
</dbReference>
<dbReference type="PIR" id="G72022">
    <property type="entry name" value="G72022"/>
</dbReference>
<dbReference type="RefSeq" id="NP_225078.1">
    <property type="nucleotide sequence ID" value="NC_000922.1"/>
</dbReference>
<dbReference type="RefSeq" id="WP_010883518.1">
    <property type="nucleotide sequence ID" value="NZ_LN847257.1"/>
</dbReference>
<dbReference type="SMR" id="Q9Z723"/>
<dbReference type="STRING" id="406984.CPK_ORF00292"/>
<dbReference type="GeneID" id="45050938"/>
<dbReference type="KEGG" id="cpa:CP_0983"/>
<dbReference type="KEGG" id="cpj:nqr6"/>
<dbReference type="KEGG" id="cpn:CPn_0883"/>
<dbReference type="KEGG" id="cpt:CpB0912"/>
<dbReference type="PATRIC" id="fig|115713.3.peg.964"/>
<dbReference type="eggNOG" id="COG2871">
    <property type="taxonomic scope" value="Bacteria"/>
</dbReference>
<dbReference type="HOGENOM" id="CLU_003827_7_2_0"/>
<dbReference type="OrthoDB" id="9796486at2"/>
<dbReference type="Proteomes" id="UP000000583">
    <property type="component" value="Chromosome"/>
</dbReference>
<dbReference type="Proteomes" id="UP000000801">
    <property type="component" value="Chromosome"/>
</dbReference>
<dbReference type="GO" id="GO:0005886">
    <property type="term" value="C:plasma membrane"/>
    <property type="evidence" value="ECO:0007669"/>
    <property type="project" value="UniProtKB-SubCell"/>
</dbReference>
<dbReference type="GO" id="GO:0051537">
    <property type="term" value="F:2 iron, 2 sulfur cluster binding"/>
    <property type="evidence" value="ECO:0007669"/>
    <property type="project" value="UniProtKB-KW"/>
</dbReference>
<dbReference type="GO" id="GO:0009055">
    <property type="term" value="F:electron transfer activity"/>
    <property type="evidence" value="ECO:0007669"/>
    <property type="project" value="UniProtKB-UniRule"/>
</dbReference>
<dbReference type="GO" id="GO:0046872">
    <property type="term" value="F:metal ion binding"/>
    <property type="evidence" value="ECO:0007669"/>
    <property type="project" value="UniProtKB-KW"/>
</dbReference>
<dbReference type="GO" id="GO:0016655">
    <property type="term" value="F:oxidoreductase activity, acting on NAD(P)H, quinone or similar compound as acceptor"/>
    <property type="evidence" value="ECO:0007669"/>
    <property type="project" value="InterPro"/>
</dbReference>
<dbReference type="GO" id="GO:0006814">
    <property type="term" value="P:sodium ion transport"/>
    <property type="evidence" value="ECO:0007669"/>
    <property type="project" value="UniProtKB-UniRule"/>
</dbReference>
<dbReference type="CDD" id="cd00207">
    <property type="entry name" value="fer2"/>
    <property type="match status" value="1"/>
</dbReference>
<dbReference type="CDD" id="cd06188">
    <property type="entry name" value="NADH_quinone_reductase"/>
    <property type="match status" value="1"/>
</dbReference>
<dbReference type="Gene3D" id="3.10.20.30">
    <property type="match status" value="1"/>
</dbReference>
<dbReference type="Gene3D" id="3.40.50.80">
    <property type="entry name" value="Nucleotide-binding domain of ferredoxin-NADP reductase (FNR) module"/>
    <property type="match status" value="1"/>
</dbReference>
<dbReference type="Gene3D" id="2.40.30.10">
    <property type="entry name" value="Translation factors"/>
    <property type="match status" value="1"/>
</dbReference>
<dbReference type="HAMAP" id="MF_00430">
    <property type="entry name" value="NqrF"/>
    <property type="match status" value="1"/>
</dbReference>
<dbReference type="InterPro" id="IPR036010">
    <property type="entry name" value="2Fe-2S_ferredoxin-like_sf"/>
</dbReference>
<dbReference type="InterPro" id="IPR001041">
    <property type="entry name" value="2Fe-2S_ferredoxin-type"/>
</dbReference>
<dbReference type="InterPro" id="IPR012675">
    <property type="entry name" value="Beta-grasp_dom_sf"/>
</dbReference>
<dbReference type="InterPro" id="IPR017927">
    <property type="entry name" value="FAD-bd_FR_type"/>
</dbReference>
<dbReference type="InterPro" id="IPR039261">
    <property type="entry name" value="FNR_nucleotide-bd"/>
</dbReference>
<dbReference type="InterPro" id="IPR010205">
    <property type="entry name" value="NqrF"/>
</dbReference>
<dbReference type="InterPro" id="IPR001433">
    <property type="entry name" value="OxRdtase_FAD/NAD-bd"/>
</dbReference>
<dbReference type="InterPro" id="IPR017938">
    <property type="entry name" value="Riboflavin_synthase-like_b-brl"/>
</dbReference>
<dbReference type="NCBIfam" id="TIGR01941">
    <property type="entry name" value="nqrF"/>
    <property type="match status" value="1"/>
</dbReference>
<dbReference type="PANTHER" id="PTHR43644">
    <property type="entry name" value="NA(+)-TRANSLOCATING NADH-QUINONE REDUCTASE SUBUNIT"/>
    <property type="match status" value="1"/>
</dbReference>
<dbReference type="PANTHER" id="PTHR43644:SF1">
    <property type="entry name" value="NAD(P)H-FLAVIN REDUCTASE"/>
    <property type="match status" value="1"/>
</dbReference>
<dbReference type="Pfam" id="PF00111">
    <property type="entry name" value="Fer2"/>
    <property type="match status" value="1"/>
</dbReference>
<dbReference type="Pfam" id="PF00175">
    <property type="entry name" value="NAD_binding_1"/>
    <property type="match status" value="1"/>
</dbReference>
<dbReference type="PIRSF" id="PIRSF000044">
    <property type="entry name" value="Cis_Diol_DH_RD"/>
    <property type="match status" value="1"/>
</dbReference>
<dbReference type="SUPFAM" id="SSF54292">
    <property type="entry name" value="2Fe-2S ferredoxin-like"/>
    <property type="match status" value="1"/>
</dbReference>
<dbReference type="SUPFAM" id="SSF52343">
    <property type="entry name" value="Ferredoxin reductase-like, C-terminal NADP-linked domain"/>
    <property type="match status" value="1"/>
</dbReference>
<dbReference type="SUPFAM" id="SSF63380">
    <property type="entry name" value="Riboflavin synthase domain-like"/>
    <property type="match status" value="1"/>
</dbReference>
<dbReference type="PROSITE" id="PS51085">
    <property type="entry name" value="2FE2S_FER_2"/>
    <property type="match status" value="1"/>
</dbReference>
<dbReference type="PROSITE" id="PS51384">
    <property type="entry name" value="FAD_FR"/>
    <property type="match status" value="1"/>
</dbReference>
<protein>
    <recommendedName>
        <fullName evidence="1">Na(+)-translocating NADH-quinone reductase subunit F</fullName>
        <shortName evidence="1">Na(+)-NQR subunit F</shortName>
        <shortName evidence="1">Na(+)-translocating NQR subunit F</shortName>
        <ecNumber evidence="1">7.2.1.1</ecNumber>
    </recommendedName>
    <alternativeName>
        <fullName evidence="1">NQR complex subunit F</fullName>
    </alternativeName>
    <alternativeName>
        <fullName evidence="1">NQR-1 subunit F</fullName>
    </alternativeName>
</protein>